<protein>
    <recommendedName>
        <fullName evidence="1">UPF0253 protein YaeP</fullName>
    </recommendedName>
</protein>
<comment type="similarity">
    <text evidence="1">Belongs to the UPF0253 family.</text>
</comment>
<evidence type="ECO:0000255" key="1">
    <source>
        <dbReference type="HAMAP-Rule" id="MF_01064"/>
    </source>
</evidence>
<proteinExistence type="inferred from homology"/>
<sequence length="66" mass="7214">MEKYCELIRKRYAEIASGDLGYVPDALGCVLKVLNEMAADDALSEAVREKAAYAAANLLVSDYVNE</sequence>
<name>YAEP_ECO24</name>
<organism>
    <name type="scientific">Escherichia coli O139:H28 (strain E24377A / ETEC)</name>
    <dbReference type="NCBI Taxonomy" id="331111"/>
    <lineage>
        <taxon>Bacteria</taxon>
        <taxon>Pseudomonadati</taxon>
        <taxon>Pseudomonadota</taxon>
        <taxon>Gammaproteobacteria</taxon>
        <taxon>Enterobacterales</taxon>
        <taxon>Enterobacteriaceae</taxon>
        <taxon>Escherichia</taxon>
    </lineage>
</organism>
<feature type="chain" id="PRO_1000064500" description="UPF0253 protein YaeP">
    <location>
        <begin position="1"/>
        <end position="66"/>
    </location>
</feature>
<dbReference type="EMBL" id="CP000800">
    <property type="protein sequence ID" value="ABV16652.1"/>
    <property type="molecule type" value="Genomic_DNA"/>
</dbReference>
<dbReference type="RefSeq" id="WP_000417058.1">
    <property type="nucleotide sequence ID" value="NC_009801.1"/>
</dbReference>
<dbReference type="SMR" id="A7ZHT0"/>
<dbReference type="KEGG" id="ecw:EcE24377A_0194"/>
<dbReference type="HOGENOM" id="CLU_190008_0_0_6"/>
<dbReference type="Proteomes" id="UP000001122">
    <property type="component" value="Chromosome"/>
</dbReference>
<dbReference type="HAMAP" id="MF_01064">
    <property type="entry name" value="UPF0253"/>
    <property type="match status" value="1"/>
</dbReference>
<dbReference type="InterPro" id="IPR009624">
    <property type="entry name" value="UPF0253"/>
</dbReference>
<dbReference type="NCBIfam" id="NF003436">
    <property type="entry name" value="PRK04964.1"/>
    <property type="match status" value="1"/>
</dbReference>
<dbReference type="Pfam" id="PF06786">
    <property type="entry name" value="UPF0253"/>
    <property type="match status" value="1"/>
</dbReference>
<keyword id="KW-1185">Reference proteome</keyword>
<gene>
    <name evidence="1" type="primary">yaeP</name>
    <name type="ordered locus">EcE24377A_0194</name>
</gene>
<accession>A7ZHT0</accession>
<reference key="1">
    <citation type="journal article" date="2008" name="J. Bacteriol.">
        <title>The pangenome structure of Escherichia coli: comparative genomic analysis of E. coli commensal and pathogenic isolates.</title>
        <authorList>
            <person name="Rasko D.A."/>
            <person name="Rosovitz M.J."/>
            <person name="Myers G.S.A."/>
            <person name="Mongodin E.F."/>
            <person name="Fricke W.F."/>
            <person name="Gajer P."/>
            <person name="Crabtree J."/>
            <person name="Sebaihia M."/>
            <person name="Thomson N.R."/>
            <person name="Chaudhuri R."/>
            <person name="Henderson I.R."/>
            <person name="Sperandio V."/>
            <person name="Ravel J."/>
        </authorList>
    </citation>
    <scope>NUCLEOTIDE SEQUENCE [LARGE SCALE GENOMIC DNA]</scope>
    <source>
        <strain>E24377A / ETEC</strain>
    </source>
</reference>